<feature type="signal peptide" evidence="3">
    <location>
        <begin position="1"/>
        <end position="28"/>
    </location>
</feature>
<feature type="chain" id="PRO_5004326528" description="Endoplasmic reticulum chaperone BiP" evidence="3">
    <location>
        <begin position="29"/>
        <end position="668"/>
    </location>
</feature>
<feature type="region of interest" description="Nucleotide-binding (NBD)" evidence="1">
    <location>
        <begin position="132"/>
        <end position="287"/>
    </location>
</feature>
<feature type="region of interest" description="Disordered" evidence="7">
    <location>
        <begin position="644"/>
        <end position="668"/>
    </location>
</feature>
<feature type="short sequence motif" description="Prevents secretion from ER" evidence="5">
    <location>
        <begin position="665"/>
        <end position="668"/>
    </location>
</feature>
<feature type="compositionally biased region" description="Acidic residues" evidence="7">
    <location>
        <begin position="656"/>
        <end position="668"/>
    </location>
</feature>
<feature type="binding site" evidence="1">
    <location>
        <begin position="44"/>
        <end position="47"/>
    </location>
    <ligand>
        <name>ATP</name>
        <dbReference type="ChEBI" id="CHEBI:30616"/>
    </ligand>
</feature>
<feature type="binding site" evidence="1">
    <location>
        <position position="103"/>
    </location>
    <ligand>
        <name>ATP</name>
        <dbReference type="ChEBI" id="CHEBI:30616"/>
    </ligand>
</feature>
<feature type="binding site" evidence="1">
    <location>
        <begin position="234"/>
        <end position="236"/>
    </location>
    <ligand>
        <name>ATP</name>
        <dbReference type="ChEBI" id="CHEBI:30616"/>
    </ligand>
</feature>
<feature type="binding site" evidence="1">
    <location>
        <begin position="300"/>
        <end position="307"/>
    </location>
    <ligand>
        <name>ATP</name>
        <dbReference type="ChEBI" id="CHEBI:30616"/>
    </ligand>
</feature>
<feature type="binding site" evidence="1">
    <location>
        <begin position="371"/>
        <end position="374"/>
    </location>
    <ligand>
        <name>ATP</name>
        <dbReference type="ChEBI" id="CHEBI:30616"/>
    </ligand>
</feature>
<feature type="glycosylation site" description="N-linked (GlcNAc...) asparagine" evidence="4">
    <location>
        <position position="617"/>
    </location>
</feature>
<organism evidence="11">
    <name type="scientific">Corylus avellana</name>
    <name type="common">European hazel</name>
    <name type="synonym">Corylus maxima</name>
    <dbReference type="NCBI Taxonomy" id="13451"/>
    <lineage>
        <taxon>Eukaryota</taxon>
        <taxon>Viridiplantae</taxon>
        <taxon>Streptophyta</taxon>
        <taxon>Embryophyta</taxon>
        <taxon>Tracheophyta</taxon>
        <taxon>Spermatophyta</taxon>
        <taxon>Magnoliopsida</taxon>
        <taxon>eudicotyledons</taxon>
        <taxon>Gunneridae</taxon>
        <taxon>Pentapetalae</taxon>
        <taxon>rosids</taxon>
        <taxon>fabids</taxon>
        <taxon>Fagales</taxon>
        <taxon>Betulaceae</taxon>
        <taxon>Corylus</taxon>
    </lineage>
</organism>
<evidence type="ECO:0000250" key="1">
    <source>
        <dbReference type="UniProtKB" id="P11021"/>
    </source>
</evidence>
<evidence type="ECO:0000250" key="2">
    <source>
        <dbReference type="UniProtKB" id="Q6Z7B0"/>
    </source>
</evidence>
<evidence type="ECO:0000255" key="3"/>
<evidence type="ECO:0000255" key="4">
    <source>
        <dbReference type="PROSITE-ProRule" id="PRU00498"/>
    </source>
</evidence>
<evidence type="ECO:0000255" key="5">
    <source>
        <dbReference type="PROSITE-ProRule" id="PRU10138"/>
    </source>
</evidence>
<evidence type="ECO:0000255" key="6">
    <source>
        <dbReference type="RuleBase" id="RU003322"/>
    </source>
</evidence>
<evidence type="ECO:0000256" key="7">
    <source>
        <dbReference type="SAM" id="MobiDB-lite"/>
    </source>
</evidence>
<evidence type="ECO:0000269" key="8">
    <source>
    </source>
</evidence>
<evidence type="ECO:0000303" key="9">
    <source>
    </source>
</evidence>
<evidence type="ECO:0000305" key="10"/>
<evidence type="ECO:0000312" key="11">
    <source>
        <dbReference type="EMBL" id="CAC14168.1"/>
    </source>
</evidence>
<comment type="function">
    <text evidence="10">Probably plays a role in facilitating the assembly of multimeric protein complexes inside the ER.</text>
</comment>
<comment type="catalytic activity">
    <reaction evidence="1">
        <text>ATP + H2O = ADP + phosphate + H(+)</text>
        <dbReference type="Rhea" id="RHEA:13065"/>
        <dbReference type="ChEBI" id="CHEBI:15377"/>
        <dbReference type="ChEBI" id="CHEBI:15378"/>
        <dbReference type="ChEBI" id="CHEBI:30616"/>
        <dbReference type="ChEBI" id="CHEBI:43474"/>
        <dbReference type="ChEBI" id="CHEBI:456216"/>
        <dbReference type="EC" id="3.6.4.10"/>
    </reaction>
</comment>
<comment type="subcellular location">
    <subcellularLocation>
        <location evidence="2">Endoplasmic reticulum lumen</location>
    </subcellularLocation>
</comment>
<comment type="tissue specificity">
    <text evidence="8">Expressed in pollen and nuts (at protein level).</text>
</comment>
<comment type="developmental stage">
    <text evidence="8">Expressed during pollen development. At the immature, bicellular stage, expressed exclusively in the intine. At the mature, tricellular stage, expressed at the boundary of cytoplasm and intine of the pollen grains, specifically in the region of the germinal apertures. The strongest expression at the mature stage is shown under normal environmental conditions. After germination, expressed at the tip region of the pollen tube.</text>
</comment>
<comment type="PTM">
    <text evidence="8">The N-terminus is blocked.</text>
</comment>
<comment type="allergen">
    <text evidence="8">Causes an allergic reaction in human. Binds to IgE in 71% of the 7 patients tested allergic to tree pollen, including hazel and birch pollen.</text>
</comment>
<comment type="similarity">
    <text evidence="6 10">Belongs to the heat shock protein 70 family.</text>
</comment>
<sequence>MAGSWRARGSLVVLAILLFGCLFAISIAKEEATKLGTVIGIDLGTTYSCVGVYKNGHVEIIANDQGNRITPSWVGFTDGERLIGEAAKNQAAVNPERTIFDVKRLIGRKFEDKEVQKDMKLVPYKIVNKDGKPYIQVKIKDGETKVFSPEEISAMILIKMKETAEAFLGKKIKDAVVTVPAYFNDAQRQATKDAGIIAGLNVARIINEPTAAAIAYGLDKKGGEKNILVFDLGGGTFDVSILTIDNGVFEVLSTNGDTHLGGEDFDMRIMEYFIKLIKKKHGKDISKDNRAIGKLRREAERAKRALSSQHQVRVEIESLFDGVDFSEPLTRARFEELNNDFVQKDHGTREEAMEDAGLAKNQIDEIVLVGGSTRIPKVQQLLKDYFDGKEPNKGVNPDEAVAYGAAVQGSILSGEGGEETKDILLLDVAPLTLGIETVGGVMTKLIPRNTVIPTKKSQVFTTYQDQQTTVSIQVFEGERSLTKDCRNLGKFDLTGVPPAPRGTPQIEVTFEVDANGILNVKAEDKGTGKSEKITITNDKGRLSQEEIDRMVQEAEEFAEEDKKVKERIDARNTLETYVYNMKNQVNDKDKLADKLESDEKDKIESAVKDALEWLDDNQSAEKEDYDEKLKEVEAVCNPIITAVYQRSGGAPGGGSGEEDEDSESHDEL</sequence>
<protein>
    <recommendedName>
        <fullName evidence="10">Endoplasmic reticulum chaperone BiP</fullName>
        <ecNumber evidence="1">3.6.4.10</ecNumber>
    </recommendedName>
    <alternativeName>
        <fullName evidence="10">78 kDa glucose-regulated protein homolog</fullName>
        <shortName evidence="10">GRP-78 homolog</shortName>
    </alternativeName>
    <alternativeName>
        <fullName evidence="10">Binding-immunoglobulin protein</fullName>
        <shortName evidence="9">BiP</shortName>
    </alternativeName>
    <alternativeName>
        <fullName evidence="10">Heat shock protein 70 family protein</fullName>
        <shortName evidence="10">HSP70 family protein</shortName>
    </alternativeName>
    <alternativeName>
        <fullName evidence="9">Luminal-binding protein</fullName>
    </alternativeName>
    <allergenName evidence="10">Cor a 10.0101</allergenName>
</protein>
<accession>Q9FSY7</accession>
<dbReference type="EC" id="3.6.4.10" evidence="1"/>
<dbReference type="EMBL" id="AJ295617">
    <property type="protein sequence ID" value="CAC14168.1"/>
    <property type="molecule type" value="mRNA"/>
</dbReference>
<dbReference type="SMR" id="Q9FSY7"/>
<dbReference type="Allergome" id="243">
    <property type="allergen name" value="Cor a 10"/>
</dbReference>
<dbReference type="Allergome" id="3215">
    <property type="allergen name" value="Cor a 10.0101"/>
</dbReference>
<dbReference type="GO" id="GO:0005788">
    <property type="term" value="C:endoplasmic reticulum lumen"/>
    <property type="evidence" value="ECO:0000250"/>
    <property type="project" value="UniProtKB"/>
</dbReference>
<dbReference type="GO" id="GO:0005524">
    <property type="term" value="F:ATP binding"/>
    <property type="evidence" value="ECO:0000250"/>
    <property type="project" value="UniProtKB"/>
</dbReference>
<dbReference type="GO" id="GO:0016887">
    <property type="term" value="F:ATP hydrolysis activity"/>
    <property type="evidence" value="ECO:0007669"/>
    <property type="project" value="RHEA"/>
</dbReference>
<dbReference type="GO" id="GO:0140662">
    <property type="term" value="F:ATP-dependent protein folding chaperone"/>
    <property type="evidence" value="ECO:0007669"/>
    <property type="project" value="InterPro"/>
</dbReference>
<dbReference type="GO" id="GO:0009555">
    <property type="term" value="P:pollen development"/>
    <property type="evidence" value="ECO:0000270"/>
    <property type="project" value="UniProtKB"/>
</dbReference>
<dbReference type="GO" id="GO:0009846">
    <property type="term" value="P:pollen germination"/>
    <property type="evidence" value="ECO:0000270"/>
    <property type="project" value="UniProtKB"/>
</dbReference>
<dbReference type="GO" id="GO:0009860">
    <property type="term" value="P:pollen tube growth"/>
    <property type="evidence" value="ECO:0000270"/>
    <property type="project" value="UniProtKB"/>
</dbReference>
<dbReference type="GO" id="GO:0034975">
    <property type="term" value="P:protein folding in endoplasmic reticulum"/>
    <property type="evidence" value="ECO:0000250"/>
    <property type="project" value="UniProtKB"/>
</dbReference>
<dbReference type="CDD" id="cd10241">
    <property type="entry name" value="ASKHA_NBD_HSP70_BiP"/>
    <property type="match status" value="1"/>
</dbReference>
<dbReference type="FunFam" id="3.90.640.10:FF:000153">
    <property type="entry name" value="Endoplasmic reticulum chaperone BiP"/>
    <property type="match status" value="1"/>
</dbReference>
<dbReference type="FunFam" id="2.60.34.10:FF:000002">
    <property type="entry name" value="Heat shock 70 kDa"/>
    <property type="match status" value="1"/>
</dbReference>
<dbReference type="FunFam" id="3.30.420.40:FF:000026">
    <property type="entry name" value="Heat shock protein 70"/>
    <property type="match status" value="1"/>
</dbReference>
<dbReference type="FunFam" id="3.30.30.30:FF:000005">
    <property type="entry name" value="Heat shock protein ssb1"/>
    <property type="match status" value="1"/>
</dbReference>
<dbReference type="FunFam" id="1.20.1270.10:FF:000015">
    <property type="entry name" value="Luminal-binding protein 5"/>
    <property type="match status" value="1"/>
</dbReference>
<dbReference type="Gene3D" id="1.20.1270.10">
    <property type="match status" value="1"/>
</dbReference>
<dbReference type="Gene3D" id="3.30.420.40">
    <property type="match status" value="2"/>
</dbReference>
<dbReference type="Gene3D" id="3.90.640.10">
    <property type="entry name" value="Actin, Chain A, domain 4"/>
    <property type="match status" value="1"/>
</dbReference>
<dbReference type="Gene3D" id="2.60.34.10">
    <property type="entry name" value="Substrate Binding Domain Of DNAk, Chain A, domain 1"/>
    <property type="match status" value="1"/>
</dbReference>
<dbReference type="InterPro" id="IPR043129">
    <property type="entry name" value="ATPase_NBD"/>
</dbReference>
<dbReference type="InterPro" id="IPR042050">
    <property type="entry name" value="BIP_NBD"/>
</dbReference>
<dbReference type="InterPro" id="IPR018181">
    <property type="entry name" value="Heat_shock_70_CS"/>
</dbReference>
<dbReference type="InterPro" id="IPR029048">
    <property type="entry name" value="HSP70_C_sf"/>
</dbReference>
<dbReference type="InterPro" id="IPR029047">
    <property type="entry name" value="HSP70_peptide-bd_sf"/>
</dbReference>
<dbReference type="InterPro" id="IPR013126">
    <property type="entry name" value="Hsp_70_fam"/>
</dbReference>
<dbReference type="NCBIfam" id="NF001413">
    <property type="entry name" value="PRK00290.1"/>
    <property type="match status" value="1"/>
</dbReference>
<dbReference type="PANTHER" id="PTHR19375">
    <property type="entry name" value="HEAT SHOCK PROTEIN 70KDA"/>
    <property type="match status" value="1"/>
</dbReference>
<dbReference type="Pfam" id="PF00012">
    <property type="entry name" value="HSP70"/>
    <property type="match status" value="1"/>
</dbReference>
<dbReference type="PRINTS" id="PR00301">
    <property type="entry name" value="HEATSHOCK70"/>
</dbReference>
<dbReference type="SUPFAM" id="SSF53067">
    <property type="entry name" value="Actin-like ATPase domain"/>
    <property type="match status" value="2"/>
</dbReference>
<dbReference type="SUPFAM" id="SSF100934">
    <property type="entry name" value="Heat shock protein 70kD (HSP70), C-terminal subdomain"/>
    <property type="match status" value="1"/>
</dbReference>
<dbReference type="SUPFAM" id="SSF100920">
    <property type="entry name" value="Heat shock protein 70kD (HSP70), peptide-binding domain"/>
    <property type="match status" value="1"/>
</dbReference>
<dbReference type="PROSITE" id="PS00014">
    <property type="entry name" value="ER_TARGET"/>
    <property type="match status" value="1"/>
</dbReference>
<dbReference type="PROSITE" id="PS00297">
    <property type="entry name" value="HSP70_1"/>
    <property type="match status" value="1"/>
</dbReference>
<dbReference type="PROSITE" id="PS00329">
    <property type="entry name" value="HSP70_2"/>
    <property type="match status" value="1"/>
</dbReference>
<dbReference type="PROSITE" id="PS01036">
    <property type="entry name" value="HSP70_3"/>
    <property type="match status" value="1"/>
</dbReference>
<reference evidence="11" key="1">
    <citation type="journal article" date="2003" name="Int. Arch. Allergy Immunol.">
        <title>Molecular cloning and characterization of hazel pollen protein (70 kD) as a luminal binding protein (BiP): a novel cross-reactive plant allergen.</title>
        <authorList>
            <person name="Gruehn S."/>
            <person name="Suphioglu C."/>
            <person name="O'Hehir R.E."/>
            <person name="Volkmann D."/>
        </authorList>
    </citation>
    <scope>NUCLEOTIDE SEQUENCE [MRNA]</scope>
    <scope>TISSUE SPECIFICITY</scope>
    <scope>DEVELOPMENTAL STAGE</scope>
    <scope>PTM</scope>
    <scope>ALLERGEN</scope>
    <source>
        <tissue evidence="9">Pollen</tissue>
    </source>
</reference>
<proteinExistence type="evidence at protein level"/>
<keyword id="KW-0020">Allergen</keyword>
<keyword id="KW-0067">ATP-binding</keyword>
<keyword id="KW-0143">Chaperone</keyword>
<keyword id="KW-0256">Endoplasmic reticulum</keyword>
<keyword id="KW-0325">Glycoprotein</keyword>
<keyword id="KW-0378">Hydrolase</keyword>
<keyword id="KW-0547">Nucleotide-binding</keyword>
<keyword id="KW-0732">Signal</keyword>
<name>BIP_CORAV</name>